<gene>
    <name type="ordered locus">Tgr7_0100</name>
</gene>
<proteinExistence type="inferred from homology"/>
<protein>
    <recommendedName>
        <fullName>UPF0758 protein Tgr7_0100</fullName>
    </recommendedName>
</protein>
<keyword id="KW-0378">Hydrolase</keyword>
<keyword id="KW-0479">Metal-binding</keyword>
<keyword id="KW-0482">Metalloprotease</keyword>
<keyword id="KW-0645">Protease</keyword>
<keyword id="KW-1185">Reference proteome</keyword>
<keyword id="KW-0862">Zinc</keyword>
<sequence length="223" mass="24450">MPITDWPADERPREKLLSRGAAALSDAELLAIFLRTGVAGKTAVDLARELLSRFGGLRPLLQADLVSFSSARGLGSAKYAQLQAVLEMGRRHLSESLARGDALTSPDDTRRFLAARLRDYPFEVFACLFLDNRHRVIAFEELFRGTIDGASVHPREVVRRALAHNAAALILAHNHPSGVAEPSRSDEAITRRLRDALALVDIRVLDHVVVGDSLVSFAERGLL</sequence>
<dbReference type="EMBL" id="CP001339">
    <property type="protein sequence ID" value="ACL71203.1"/>
    <property type="molecule type" value="Genomic_DNA"/>
</dbReference>
<dbReference type="RefSeq" id="WP_012636692.1">
    <property type="nucleotide sequence ID" value="NC_011901.1"/>
</dbReference>
<dbReference type="SMR" id="B8GTE3"/>
<dbReference type="STRING" id="396588.Tgr7_0100"/>
<dbReference type="KEGG" id="tgr:Tgr7_0100"/>
<dbReference type="eggNOG" id="COG2003">
    <property type="taxonomic scope" value="Bacteria"/>
</dbReference>
<dbReference type="HOGENOM" id="CLU_073529_0_1_6"/>
<dbReference type="OrthoDB" id="9804482at2"/>
<dbReference type="Proteomes" id="UP000002383">
    <property type="component" value="Chromosome"/>
</dbReference>
<dbReference type="GO" id="GO:0046872">
    <property type="term" value="F:metal ion binding"/>
    <property type="evidence" value="ECO:0007669"/>
    <property type="project" value="UniProtKB-KW"/>
</dbReference>
<dbReference type="GO" id="GO:0008237">
    <property type="term" value="F:metallopeptidase activity"/>
    <property type="evidence" value="ECO:0007669"/>
    <property type="project" value="UniProtKB-KW"/>
</dbReference>
<dbReference type="GO" id="GO:0006508">
    <property type="term" value="P:proteolysis"/>
    <property type="evidence" value="ECO:0007669"/>
    <property type="project" value="UniProtKB-KW"/>
</dbReference>
<dbReference type="CDD" id="cd08071">
    <property type="entry name" value="MPN_DUF2466"/>
    <property type="match status" value="1"/>
</dbReference>
<dbReference type="FunFam" id="3.40.140.10:FF:000032">
    <property type="entry name" value="DNA repair protein RadC"/>
    <property type="match status" value="1"/>
</dbReference>
<dbReference type="Gene3D" id="3.40.140.10">
    <property type="entry name" value="Cytidine Deaminase, domain 2"/>
    <property type="match status" value="1"/>
</dbReference>
<dbReference type="InterPro" id="IPR037518">
    <property type="entry name" value="MPN"/>
</dbReference>
<dbReference type="InterPro" id="IPR025657">
    <property type="entry name" value="RadC_JAB"/>
</dbReference>
<dbReference type="InterPro" id="IPR010994">
    <property type="entry name" value="RuvA_2-like"/>
</dbReference>
<dbReference type="InterPro" id="IPR001405">
    <property type="entry name" value="UPF0758"/>
</dbReference>
<dbReference type="InterPro" id="IPR020891">
    <property type="entry name" value="UPF0758_CS"/>
</dbReference>
<dbReference type="InterPro" id="IPR046778">
    <property type="entry name" value="UPF0758_N"/>
</dbReference>
<dbReference type="NCBIfam" id="NF000642">
    <property type="entry name" value="PRK00024.1"/>
    <property type="match status" value="1"/>
</dbReference>
<dbReference type="NCBIfam" id="TIGR00608">
    <property type="entry name" value="radc"/>
    <property type="match status" value="1"/>
</dbReference>
<dbReference type="PANTHER" id="PTHR30471">
    <property type="entry name" value="DNA REPAIR PROTEIN RADC"/>
    <property type="match status" value="1"/>
</dbReference>
<dbReference type="PANTHER" id="PTHR30471:SF3">
    <property type="entry name" value="UPF0758 PROTEIN YEES-RELATED"/>
    <property type="match status" value="1"/>
</dbReference>
<dbReference type="Pfam" id="PF04002">
    <property type="entry name" value="RadC"/>
    <property type="match status" value="1"/>
</dbReference>
<dbReference type="Pfam" id="PF20582">
    <property type="entry name" value="UPF0758_N"/>
    <property type="match status" value="1"/>
</dbReference>
<dbReference type="SUPFAM" id="SSF102712">
    <property type="entry name" value="JAB1/MPN domain"/>
    <property type="match status" value="1"/>
</dbReference>
<dbReference type="SUPFAM" id="SSF47781">
    <property type="entry name" value="RuvA domain 2-like"/>
    <property type="match status" value="1"/>
</dbReference>
<dbReference type="PROSITE" id="PS50249">
    <property type="entry name" value="MPN"/>
    <property type="match status" value="1"/>
</dbReference>
<dbReference type="PROSITE" id="PS01302">
    <property type="entry name" value="UPF0758"/>
    <property type="match status" value="1"/>
</dbReference>
<feature type="chain" id="PRO_1000195313" description="UPF0758 protein Tgr7_0100">
    <location>
        <begin position="1"/>
        <end position="223"/>
    </location>
</feature>
<feature type="domain" description="MPN" evidence="1">
    <location>
        <begin position="102"/>
        <end position="223"/>
    </location>
</feature>
<feature type="short sequence motif" description="JAMM motif" evidence="1">
    <location>
        <begin position="173"/>
        <end position="186"/>
    </location>
</feature>
<feature type="binding site" evidence="1">
    <location>
        <position position="173"/>
    </location>
    <ligand>
        <name>Zn(2+)</name>
        <dbReference type="ChEBI" id="CHEBI:29105"/>
        <note>catalytic</note>
    </ligand>
</feature>
<feature type="binding site" evidence="1">
    <location>
        <position position="175"/>
    </location>
    <ligand>
        <name>Zn(2+)</name>
        <dbReference type="ChEBI" id="CHEBI:29105"/>
        <note>catalytic</note>
    </ligand>
</feature>
<feature type="binding site" evidence="1">
    <location>
        <position position="186"/>
    </location>
    <ligand>
        <name>Zn(2+)</name>
        <dbReference type="ChEBI" id="CHEBI:29105"/>
        <note>catalytic</note>
    </ligand>
</feature>
<comment type="similarity">
    <text evidence="2">Belongs to the UPF0758 family.</text>
</comment>
<accession>B8GTE3</accession>
<name>Y100_THISH</name>
<reference key="1">
    <citation type="journal article" date="2011" name="Stand. Genomic Sci.">
        <title>Complete genome sequence of 'Thioalkalivibrio sulfidophilus' HL-EbGr7.</title>
        <authorList>
            <person name="Muyzer G."/>
            <person name="Sorokin D.Y."/>
            <person name="Mavromatis K."/>
            <person name="Lapidus A."/>
            <person name="Clum A."/>
            <person name="Ivanova N."/>
            <person name="Pati A."/>
            <person name="d'Haeseleer P."/>
            <person name="Woyke T."/>
            <person name="Kyrpides N.C."/>
        </authorList>
    </citation>
    <scope>NUCLEOTIDE SEQUENCE [LARGE SCALE GENOMIC DNA]</scope>
    <source>
        <strain>HL-EbGR7</strain>
    </source>
</reference>
<evidence type="ECO:0000255" key="1">
    <source>
        <dbReference type="PROSITE-ProRule" id="PRU01182"/>
    </source>
</evidence>
<evidence type="ECO:0000305" key="2"/>
<organism>
    <name type="scientific">Thioalkalivibrio sulfidiphilus (strain HL-EbGR7)</name>
    <dbReference type="NCBI Taxonomy" id="396588"/>
    <lineage>
        <taxon>Bacteria</taxon>
        <taxon>Pseudomonadati</taxon>
        <taxon>Pseudomonadota</taxon>
        <taxon>Gammaproteobacteria</taxon>
        <taxon>Chromatiales</taxon>
        <taxon>Ectothiorhodospiraceae</taxon>
        <taxon>Thioalkalivibrio</taxon>
    </lineage>
</organism>